<name>RF3_HISS2</name>
<gene>
    <name evidence="1" type="primary">prfC</name>
    <name type="ordered locus">HSM_0709</name>
</gene>
<sequence>MSYSQQVNKRRTFAIISHPDAGKTTITEKVLLYGNAIQKAGSVKGKGSQAHAKSDWMEMEKQRGISITTSVMQFPYHDCLVNLLDTPGHEDFSEDTYRTLTAVDSCLMVIDSAKGVEERTIKLMDVTRLRDTPILTFMNKLDRDIRDPMELLDEVESVLKIRCAPITWPIGCGKLFKGVYHLYKDETYLYQSGQGHTIQDVRIVKGLNNADLDRAVGEDLARQLRDELELVKGASNEFDHDLFIRGELTPVFFGTALGNFGVDHFLDGLTQWAPAPQARQADCRLVESAEEKLTGFVFKIQANMDPKHRDRVAFMRIVSGKYEKGMKLKQVRLGKEVVLSDALTFMAGDRSHAEEAYAGDIIGLHNHGTIQIGDTFTQGEDLKFTGIPNFAPELFRRIRLKDPLKQKQLLKGLVQLSEEGAVQVFRPLTNNDLIVGAVGVLQFDVVVSRLKSEYNVEAVYETVNVATARWVECSEAKKLEEFKRKNEQNLALDGGDSLTYIAPTMVNLNLTQERYPDIQFFKTREH</sequence>
<keyword id="KW-0963">Cytoplasm</keyword>
<keyword id="KW-0342">GTP-binding</keyword>
<keyword id="KW-0547">Nucleotide-binding</keyword>
<keyword id="KW-0648">Protein biosynthesis</keyword>
<feature type="chain" id="PRO_1000075161" description="Peptide chain release factor 3">
    <location>
        <begin position="1"/>
        <end position="526"/>
    </location>
</feature>
<feature type="domain" description="tr-type G">
    <location>
        <begin position="8"/>
        <end position="277"/>
    </location>
</feature>
<feature type="binding site" evidence="1">
    <location>
        <begin position="17"/>
        <end position="24"/>
    </location>
    <ligand>
        <name>GTP</name>
        <dbReference type="ChEBI" id="CHEBI:37565"/>
    </ligand>
</feature>
<feature type="binding site" evidence="1">
    <location>
        <begin position="85"/>
        <end position="89"/>
    </location>
    <ligand>
        <name>GTP</name>
        <dbReference type="ChEBI" id="CHEBI:37565"/>
    </ligand>
</feature>
<feature type="binding site" evidence="1">
    <location>
        <begin position="139"/>
        <end position="142"/>
    </location>
    <ligand>
        <name>GTP</name>
        <dbReference type="ChEBI" id="CHEBI:37565"/>
    </ligand>
</feature>
<reference key="1">
    <citation type="submission" date="2008-02" db="EMBL/GenBank/DDBJ databases">
        <title>Complete sequence of Haemophilus somnus 2336.</title>
        <authorList>
            <consortium name="US DOE Joint Genome Institute"/>
            <person name="Siddaramappa S."/>
            <person name="Duncan A.J."/>
            <person name="Challacombe J.F."/>
            <person name="Rainey D."/>
            <person name="Gillaspy A.F."/>
            <person name="Carson M."/>
            <person name="Gipson J."/>
            <person name="Gipson M."/>
            <person name="Bruce D."/>
            <person name="Detter J.C."/>
            <person name="Han C.S."/>
            <person name="Land M."/>
            <person name="Tapia R."/>
            <person name="Thompson L.S."/>
            <person name="Orvis J."/>
            <person name="Zaitshik J."/>
            <person name="Barnes G."/>
            <person name="Brettin T.S."/>
            <person name="Dyer D.W."/>
            <person name="Inzana T.J."/>
        </authorList>
    </citation>
    <scope>NUCLEOTIDE SEQUENCE [LARGE SCALE GENOMIC DNA]</scope>
    <source>
        <strain>2336</strain>
    </source>
</reference>
<dbReference type="EMBL" id="CP000947">
    <property type="protein sequence ID" value="ACA32373.1"/>
    <property type="molecule type" value="Genomic_DNA"/>
</dbReference>
<dbReference type="RefSeq" id="WP_012341538.1">
    <property type="nucleotide sequence ID" value="NC_010519.1"/>
</dbReference>
<dbReference type="SMR" id="B0USE8"/>
<dbReference type="STRING" id="228400.HSM_0709"/>
<dbReference type="GeneID" id="31486995"/>
<dbReference type="KEGG" id="hsm:HSM_0709"/>
<dbReference type="HOGENOM" id="CLU_002794_2_1_6"/>
<dbReference type="GO" id="GO:0005829">
    <property type="term" value="C:cytosol"/>
    <property type="evidence" value="ECO:0007669"/>
    <property type="project" value="TreeGrafter"/>
</dbReference>
<dbReference type="GO" id="GO:0005525">
    <property type="term" value="F:GTP binding"/>
    <property type="evidence" value="ECO:0007669"/>
    <property type="project" value="UniProtKB-UniRule"/>
</dbReference>
<dbReference type="GO" id="GO:0003924">
    <property type="term" value="F:GTPase activity"/>
    <property type="evidence" value="ECO:0007669"/>
    <property type="project" value="InterPro"/>
</dbReference>
<dbReference type="GO" id="GO:0097216">
    <property type="term" value="F:guanosine tetraphosphate binding"/>
    <property type="evidence" value="ECO:0007669"/>
    <property type="project" value="UniProtKB-ARBA"/>
</dbReference>
<dbReference type="GO" id="GO:0016150">
    <property type="term" value="F:translation release factor activity, codon nonspecific"/>
    <property type="evidence" value="ECO:0007669"/>
    <property type="project" value="TreeGrafter"/>
</dbReference>
<dbReference type="GO" id="GO:0016149">
    <property type="term" value="F:translation release factor activity, codon specific"/>
    <property type="evidence" value="ECO:0007669"/>
    <property type="project" value="UniProtKB-UniRule"/>
</dbReference>
<dbReference type="GO" id="GO:0006449">
    <property type="term" value="P:regulation of translational termination"/>
    <property type="evidence" value="ECO:0007669"/>
    <property type="project" value="UniProtKB-UniRule"/>
</dbReference>
<dbReference type="CDD" id="cd04169">
    <property type="entry name" value="RF3"/>
    <property type="match status" value="1"/>
</dbReference>
<dbReference type="CDD" id="cd03689">
    <property type="entry name" value="RF3_II"/>
    <property type="match status" value="1"/>
</dbReference>
<dbReference type="CDD" id="cd16259">
    <property type="entry name" value="RF3_III"/>
    <property type="match status" value="1"/>
</dbReference>
<dbReference type="FunFam" id="2.40.30.10:FF:000040">
    <property type="entry name" value="Peptide chain release factor 3"/>
    <property type="match status" value="1"/>
</dbReference>
<dbReference type="FunFam" id="3.30.70.3280:FF:000001">
    <property type="entry name" value="Peptide chain release factor 3"/>
    <property type="match status" value="1"/>
</dbReference>
<dbReference type="FunFam" id="3.40.50.300:FF:000542">
    <property type="entry name" value="Peptide chain release factor 3"/>
    <property type="match status" value="1"/>
</dbReference>
<dbReference type="Gene3D" id="3.40.50.300">
    <property type="entry name" value="P-loop containing nucleotide triphosphate hydrolases"/>
    <property type="match status" value="3"/>
</dbReference>
<dbReference type="Gene3D" id="3.30.70.3280">
    <property type="entry name" value="Peptide chain release factor 3, domain III"/>
    <property type="match status" value="1"/>
</dbReference>
<dbReference type="HAMAP" id="MF_00072">
    <property type="entry name" value="Rel_fac_3"/>
    <property type="match status" value="1"/>
</dbReference>
<dbReference type="InterPro" id="IPR053905">
    <property type="entry name" value="EF-G-like_DII"/>
</dbReference>
<dbReference type="InterPro" id="IPR035647">
    <property type="entry name" value="EFG_III/V"/>
</dbReference>
<dbReference type="InterPro" id="IPR031157">
    <property type="entry name" value="G_TR_CS"/>
</dbReference>
<dbReference type="InterPro" id="IPR027417">
    <property type="entry name" value="P-loop_NTPase"/>
</dbReference>
<dbReference type="InterPro" id="IPR004548">
    <property type="entry name" value="PrfC"/>
</dbReference>
<dbReference type="InterPro" id="IPR032090">
    <property type="entry name" value="RF3_C"/>
</dbReference>
<dbReference type="InterPro" id="IPR038467">
    <property type="entry name" value="RF3_dom_3_sf"/>
</dbReference>
<dbReference type="InterPro" id="IPR041732">
    <property type="entry name" value="RF3_GTP-bd"/>
</dbReference>
<dbReference type="InterPro" id="IPR005225">
    <property type="entry name" value="Small_GTP-bd"/>
</dbReference>
<dbReference type="InterPro" id="IPR000795">
    <property type="entry name" value="T_Tr_GTP-bd_dom"/>
</dbReference>
<dbReference type="InterPro" id="IPR009000">
    <property type="entry name" value="Transl_B-barrel_sf"/>
</dbReference>
<dbReference type="NCBIfam" id="TIGR00503">
    <property type="entry name" value="prfC"/>
    <property type="match status" value="1"/>
</dbReference>
<dbReference type="NCBIfam" id="NF001964">
    <property type="entry name" value="PRK00741.1"/>
    <property type="match status" value="1"/>
</dbReference>
<dbReference type="NCBIfam" id="TIGR00231">
    <property type="entry name" value="small_GTP"/>
    <property type="match status" value="1"/>
</dbReference>
<dbReference type="PANTHER" id="PTHR43556">
    <property type="entry name" value="PEPTIDE CHAIN RELEASE FACTOR RF3"/>
    <property type="match status" value="1"/>
</dbReference>
<dbReference type="PANTHER" id="PTHR43556:SF2">
    <property type="entry name" value="PEPTIDE CHAIN RELEASE FACTOR RF3"/>
    <property type="match status" value="1"/>
</dbReference>
<dbReference type="Pfam" id="PF22042">
    <property type="entry name" value="EF-G_D2"/>
    <property type="match status" value="1"/>
</dbReference>
<dbReference type="Pfam" id="PF00009">
    <property type="entry name" value="GTP_EFTU"/>
    <property type="match status" value="1"/>
</dbReference>
<dbReference type="Pfam" id="PF16658">
    <property type="entry name" value="RF3_C"/>
    <property type="match status" value="1"/>
</dbReference>
<dbReference type="PRINTS" id="PR00315">
    <property type="entry name" value="ELONGATNFCT"/>
</dbReference>
<dbReference type="SUPFAM" id="SSF54980">
    <property type="entry name" value="EF-G C-terminal domain-like"/>
    <property type="match status" value="1"/>
</dbReference>
<dbReference type="SUPFAM" id="SSF52540">
    <property type="entry name" value="P-loop containing nucleoside triphosphate hydrolases"/>
    <property type="match status" value="1"/>
</dbReference>
<dbReference type="SUPFAM" id="SSF50447">
    <property type="entry name" value="Translation proteins"/>
    <property type="match status" value="1"/>
</dbReference>
<dbReference type="PROSITE" id="PS00301">
    <property type="entry name" value="G_TR_1"/>
    <property type="match status" value="1"/>
</dbReference>
<dbReference type="PROSITE" id="PS51722">
    <property type="entry name" value="G_TR_2"/>
    <property type="match status" value="1"/>
</dbReference>
<organism>
    <name type="scientific">Histophilus somni (strain 2336)</name>
    <name type="common">Haemophilus somnus</name>
    <dbReference type="NCBI Taxonomy" id="228400"/>
    <lineage>
        <taxon>Bacteria</taxon>
        <taxon>Pseudomonadati</taxon>
        <taxon>Pseudomonadota</taxon>
        <taxon>Gammaproteobacteria</taxon>
        <taxon>Pasteurellales</taxon>
        <taxon>Pasteurellaceae</taxon>
        <taxon>Histophilus</taxon>
    </lineage>
</organism>
<evidence type="ECO:0000255" key="1">
    <source>
        <dbReference type="HAMAP-Rule" id="MF_00072"/>
    </source>
</evidence>
<proteinExistence type="inferred from homology"/>
<protein>
    <recommendedName>
        <fullName evidence="1">Peptide chain release factor 3</fullName>
        <shortName evidence="1">RF-3</shortName>
    </recommendedName>
</protein>
<comment type="function">
    <text evidence="1">Increases the formation of ribosomal termination complexes and stimulates activities of RF-1 and RF-2. It binds guanine nucleotides and has strong preference for UGA stop codons. It may interact directly with the ribosome. The stimulation of RF-1 and RF-2 is significantly reduced by GTP and GDP, but not by GMP.</text>
</comment>
<comment type="subcellular location">
    <subcellularLocation>
        <location evidence="1">Cytoplasm</location>
    </subcellularLocation>
</comment>
<comment type="similarity">
    <text evidence="1">Belongs to the TRAFAC class translation factor GTPase superfamily. Classic translation factor GTPase family. PrfC subfamily.</text>
</comment>
<accession>B0USE8</accession>